<reference key="1">
    <citation type="journal article" date="1998" name="Nature">
        <title>Deciphering the biology of Mycobacterium tuberculosis from the complete genome sequence.</title>
        <authorList>
            <person name="Cole S.T."/>
            <person name="Brosch R."/>
            <person name="Parkhill J."/>
            <person name="Garnier T."/>
            <person name="Churcher C.M."/>
            <person name="Harris D.E."/>
            <person name="Gordon S.V."/>
            <person name="Eiglmeier K."/>
            <person name="Gas S."/>
            <person name="Barry C.E. III"/>
            <person name="Tekaia F."/>
            <person name="Badcock K."/>
            <person name="Basham D."/>
            <person name="Brown D."/>
            <person name="Chillingworth T."/>
            <person name="Connor R."/>
            <person name="Davies R.M."/>
            <person name="Devlin K."/>
            <person name="Feltwell T."/>
            <person name="Gentles S."/>
            <person name="Hamlin N."/>
            <person name="Holroyd S."/>
            <person name="Hornsby T."/>
            <person name="Jagels K."/>
            <person name="Krogh A."/>
            <person name="McLean J."/>
            <person name="Moule S."/>
            <person name="Murphy L.D."/>
            <person name="Oliver S."/>
            <person name="Osborne J."/>
            <person name="Quail M.A."/>
            <person name="Rajandream M.A."/>
            <person name="Rogers J."/>
            <person name="Rutter S."/>
            <person name="Seeger K."/>
            <person name="Skelton S."/>
            <person name="Squares S."/>
            <person name="Squares R."/>
            <person name="Sulston J.E."/>
            <person name="Taylor K."/>
            <person name="Whitehead S."/>
            <person name="Barrell B.G."/>
        </authorList>
    </citation>
    <scope>NUCLEOTIDE SEQUENCE [LARGE SCALE GENOMIC DNA]</scope>
    <source>
        <strain>ATCC 25618 / H37Rv</strain>
    </source>
</reference>
<reference key="2">
    <citation type="journal article" date="2003" name="Microbes Infect.">
        <title>Comparative proteome analysis of culture supernatant proteins of Mycobacterium tuberculosis H37Rv and H37Ra.</title>
        <authorList>
            <person name="He X.Y."/>
            <person name="Zhuang Y.H."/>
            <person name="Zhang X.G."/>
            <person name="Li G.L."/>
        </authorList>
    </citation>
    <scope>IDENTIFICATION BY MASS SPECTROMETRY</scope>
    <scope>SUBCELLULAR LOCATION</scope>
    <source>
        <strain>ATCC 27294 / TMC 102 / H37Rv</strain>
    </source>
</reference>
<reference key="3">
    <citation type="journal article" date="2009" name="PLoS Pathog.">
        <title>Systematic genetic nomenclature for type VII secretion systems.</title>
        <authorList>
            <person name="Bitter W."/>
            <person name="Houben E.N."/>
            <person name="Bottai D."/>
            <person name="Brodin P."/>
            <person name="Brown E.J."/>
            <person name="Cox J.S."/>
            <person name="Derbyshire K."/>
            <person name="Fortune S.M."/>
            <person name="Gao L.Y."/>
            <person name="Liu J."/>
            <person name="Gey van Pittius N.C."/>
            <person name="Pym A.S."/>
            <person name="Rubin E.J."/>
            <person name="Sherman D.R."/>
            <person name="Cole S.T."/>
            <person name="Brosch R."/>
        </authorList>
    </citation>
    <scope>NOMENCLATURE</scope>
</reference>
<reference evidence="7 8" key="4">
    <citation type="journal article" date="2013" name="PLoS ONE">
        <title>Heterologous expression of mycobacterial Esx complexes in Escherichia coli for structural studies is facilitated by the use of maltose binding protein fusions.</title>
        <authorList>
            <person name="Arbing M.A."/>
            <person name="Chan S."/>
            <person name="Harris L."/>
            <person name="Kuo E."/>
            <person name="Zhou T.T."/>
            <person name="Ahn C.J."/>
            <person name="Nguyen L."/>
            <person name="He Q."/>
            <person name="Lu J."/>
            <person name="Menchavez P.T."/>
            <person name="Shin A."/>
            <person name="Holton T."/>
            <person name="Sawaya M.R."/>
            <person name="Cascio D."/>
            <person name="Eisenberg D."/>
        </authorList>
    </citation>
    <scope>X-RAY CRYSTALLOGRAPHY (2.55 ANGSTROMS)</scope>
    <scope>INTERACTION WITH ESXO</scope>
</reference>
<name>ESXP_MYCTU</name>
<accession>P9WNI5</accession>
<accession>L0T9J5</accession>
<accession>P95243</accession>
<keyword id="KW-0002">3D-structure</keyword>
<keyword id="KW-1185">Reference proteome</keyword>
<keyword id="KW-0964">Secreted</keyword>
<comment type="subunit">
    <text evidence="2">Forms a complex with EsxO.</text>
</comment>
<comment type="subcellular location">
    <subcellularLocation>
        <location evidence="1">Secreted</location>
    </subcellularLocation>
    <text evidence="6">Probably secreted via the ESX-5 / type VII secretion system (T7SS).</text>
</comment>
<comment type="similarity">
    <text evidence="6">Belongs to the WXG100 family. CFP-10 subfamily.</text>
</comment>
<organism>
    <name type="scientific">Mycobacterium tuberculosis (strain ATCC 25618 / H37Rv)</name>
    <dbReference type="NCBI Taxonomy" id="83332"/>
    <lineage>
        <taxon>Bacteria</taxon>
        <taxon>Bacillati</taxon>
        <taxon>Actinomycetota</taxon>
        <taxon>Actinomycetes</taxon>
        <taxon>Mycobacteriales</taxon>
        <taxon>Mycobacteriaceae</taxon>
        <taxon>Mycobacterium</taxon>
        <taxon>Mycobacterium tuberculosis complex</taxon>
    </lineage>
</organism>
<feature type="chain" id="PRO_0000167815" description="ESAT-6-like protein EsxP">
    <location>
        <begin position="1"/>
        <end position="98"/>
    </location>
</feature>
<feature type="helix" evidence="10">
    <location>
        <begin position="5"/>
        <end position="7"/>
    </location>
</feature>
<feature type="helix" evidence="9">
    <location>
        <begin position="9"/>
        <end position="38"/>
    </location>
</feature>
<feature type="helix" evidence="9">
    <location>
        <begin position="54"/>
        <end position="95"/>
    </location>
</feature>
<sequence>MATRFMTDPHAMRDMAGRFEVHAQTVEDEARRMWASAQNISGAGWSGMAEATSLDTMAQMNQAFRNIVNMLHGVRDGLVRDANNYEQQEQASQQILSS</sequence>
<proteinExistence type="evidence at protein level"/>
<gene>
    <name evidence="3 4" type="primary">esxP</name>
    <name type="ordered locus">Rv2347c</name>
    <name type="ORF">MTCY98.16c</name>
</gene>
<dbReference type="EMBL" id="AL123456">
    <property type="protein sequence ID" value="CCP45135.1"/>
    <property type="molecule type" value="Genomic_DNA"/>
</dbReference>
<dbReference type="PIR" id="D70662">
    <property type="entry name" value="D70662"/>
</dbReference>
<dbReference type="RefSeq" id="NP_216863.1">
    <property type="nucleotide sequence ID" value="NC_000962.3"/>
</dbReference>
<dbReference type="PDB" id="3OGI">
    <property type="method" value="X-ray"/>
    <property type="resolution" value="2.55 A"/>
    <property type="chains" value="B/D=1-98"/>
</dbReference>
<dbReference type="PDB" id="4GZR">
    <property type="method" value="X-ray"/>
    <property type="resolution" value="2.55 A"/>
    <property type="chains" value="B/D=1-98"/>
</dbReference>
<dbReference type="PDBsum" id="3OGI"/>
<dbReference type="PDBsum" id="4GZR"/>
<dbReference type="SMR" id="P9WNI5"/>
<dbReference type="STRING" id="83332.Rv2347c"/>
<dbReference type="PaxDb" id="83332-Rv2347c"/>
<dbReference type="DNASU" id="886002"/>
<dbReference type="GeneID" id="886002"/>
<dbReference type="KEGG" id="mtu:Rv2347c"/>
<dbReference type="KEGG" id="mtv:RVBD_2347c"/>
<dbReference type="TubercuList" id="Rv2347c"/>
<dbReference type="eggNOG" id="COG4842">
    <property type="taxonomic scope" value="Bacteria"/>
</dbReference>
<dbReference type="InParanoid" id="P9WNI5"/>
<dbReference type="OrthoDB" id="4739539at2"/>
<dbReference type="PhylomeDB" id="P9WNI5"/>
<dbReference type="EvolutionaryTrace" id="P9WNI5"/>
<dbReference type="Proteomes" id="UP000001584">
    <property type="component" value="Chromosome"/>
</dbReference>
<dbReference type="GO" id="GO:0005576">
    <property type="term" value="C:extracellular region"/>
    <property type="evidence" value="ECO:0007669"/>
    <property type="project" value="UniProtKB-SubCell"/>
</dbReference>
<dbReference type="FunFam" id="1.10.287.1060:FF:000006">
    <property type="entry name" value="ESAT-6-like protein"/>
    <property type="match status" value="1"/>
</dbReference>
<dbReference type="Gene3D" id="1.10.287.1060">
    <property type="entry name" value="ESAT-6-like"/>
    <property type="match status" value="1"/>
</dbReference>
<dbReference type="InterPro" id="IPR036689">
    <property type="entry name" value="ESAT-6-like_sf"/>
</dbReference>
<dbReference type="InterPro" id="IPR010310">
    <property type="entry name" value="T7SS_ESAT-6-like"/>
</dbReference>
<dbReference type="NCBIfam" id="TIGR03930">
    <property type="entry name" value="WXG100_ESAT6"/>
    <property type="match status" value="1"/>
</dbReference>
<dbReference type="Pfam" id="PF06013">
    <property type="entry name" value="WXG100"/>
    <property type="match status" value="1"/>
</dbReference>
<dbReference type="SUPFAM" id="SSF140453">
    <property type="entry name" value="EsxAB dimer-like"/>
    <property type="match status" value="1"/>
</dbReference>
<evidence type="ECO:0000269" key="1">
    <source>
    </source>
</evidence>
<evidence type="ECO:0000269" key="2">
    <source>
    </source>
</evidence>
<evidence type="ECO:0000303" key="3">
    <source>
    </source>
</evidence>
<evidence type="ECO:0000303" key="4">
    <source>
    </source>
</evidence>
<evidence type="ECO:0000305" key="5"/>
<evidence type="ECO:0000305" key="6">
    <source>
    </source>
</evidence>
<evidence type="ECO:0007744" key="7">
    <source>
        <dbReference type="PDB" id="3OGI"/>
    </source>
</evidence>
<evidence type="ECO:0007744" key="8">
    <source>
        <dbReference type="PDB" id="4GZR"/>
    </source>
</evidence>
<evidence type="ECO:0007829" key="9">
    <source>
        <dbReference type="PDB" id="3OGI"/>
    </source>
</evidence>
<evidence type="ECO:0007829" key="10">
    <source>
        <dbReference type="PDB" id="4GZR"/>
    </source>
</evidence>
<protein>
    <recommendedName>
        <fullName evidence="5">ESAT-6-like protein EsxP</fullName>
    </recommendedName>
</protein>